<reference key="1">
    <citation type="journal article" date="2009" name="Genome Res.">
        <title>Complete genome of the cellulolytic thermophile Acidothermus cellulolyticus 11B provides insights into its ecophysiological and evolutionary adaptations.</title>
        <authorList>
            <person name="Barabote R.D."/>
            <person name="Xie G."/>
            <person name="Leu D.H."/>
            <person name="Normand P."/>
            <person name="Necsulea A."/>
            <person name="Daubin V."/>
            <person name="Medigue C."/>
            <person name="Adney W.S."/>
            <person name="Xu X.C."/>
            <person name="Lapidus A."/>
            <person name="Parales R.E."/>
            <person name="Detter C."/>
            <person name="Pujic P."/>
            <person name="Bruce D."/>
            <person name="Lavire C."/>
            <person name="Challacombe J.F."/>
            <person name="Brettin T.S."/>
            <person name="Berry A.M."/>
        </authorList>
    </citation>
    <scope>NUCLEOTIDE SEQUENCE [LARGE SCALE GENOMIC DNA]</scope>
    <source>
        <strain>ATCC 43068 / DSM 8971 / 11B</strain>
    </source>
</reference>
<name>RSMH_ACIC1</name>
<evidence type="ECO:0000255" key="1">
    <source>
        <dbReference type="HAMAP-Rule" id="MF_01007"/>
    </source>
</evidence>
<evidence type="ECO:0000256" key="2">
    <source>
        <dbReference type="SAM" id="MobiDB-lite"/>
    </source>
</evidence>
<dbReference type="EC" id="2.1.1.199" evidence="1"/>
<dbReference type="EMBL" id="CP000481">
    <property type="protein sequence ID" value="ABK52775.1"/>
    <property type="molecule type" value="Genomic_DNA"/>
</dbReference>
<dbReference type="RefSeq" id="WP_011719838.1">
    <property type="nucleotide sequence ID" value="NC_008578.1"/>
</dbReference>
<dbReference type="SMR" id="A0LTL5"/>
<dbReference type="FunCoup" id="A0LTL5">
    <property type="interactions" value="249"/>
</dbReference>
<dbReference type="STRING" id="351607.Acel_1002"/>
<dbReference type="KEGG" id="ace:Acel_1002"/>
<dbReference type="eggNOG" id="COG0275">
    <property type="taxonomic scope" value="Bacteria"/>
</dbReference>
<dbReference type="HOGENOM" id="CLU_038422_0_0_11"/>
<dbReference type="InParanoid" id="A0LTL5"/>
<dbReference type="OrthoDB" id="9806637at2"/>
<dbReference type="Proteomes" id="UP000008221">
    <property type="component" value="Chromosome"/>
</dbReference>
<dbReference type="GO" id="GO:0005737">
    <property type="term" value="C:cytoplasm"/>
    <property type="evidence" value="ECO:0007669"/>
    <property type="project" value="UniProtKB-SubCell"/>
</dbReference>
<dbReference type="GO" id="GO:0071424">
    <property type="term" value="F:rRNA (cytosine-N4-)-methyltransferase activity"/>
    <property type="evidence" value="ECO:0007669"/>
    <property type="project" value="UniProtKB-UniRule"/>
</dbReference>
<dbReference type="GO" id="GO:0070475">
    <property type="term" value="P:rRNA base methylation"/>
    <property type="evidence" value="ECO:0007669"/>
    <property type="project" value="UniProtKB-UniRule"/>
</dbReference>
<dbReference type="FunFam" id="1.10.150.170:FF:000001">
    <property type="entry name" value="Ribosomal RNA small subunit methyltransferase H"/>
    <property type="match status" value="1"/>
</dbReference>
<dbReference type="Gene3D" id="1.10.150.170">
    <property type="entry name" value="Putative methyltransferase TM0872, insert domain"/>
    <property type="match status" value="1"/>
</dbReference>
<dbReference type="Gene3D" id="3.40.50.150">
    <property type="entry name" value="Vaccinia Virus protein VP39"/>
    <property type="match status" value="1"/>
</dbReference>
<dbReference type="HAMAP" id="MF_01007">
    <property type="entry name" value="16SrRNA_methyltr_H"/>
    <property type="match status" value="1"/>
</dbReference>
<dbReference type="InterPro" id="IPR002903">
    <property type="entry name" value="RsmH"/>
</dbReference>
<dbReference type="InterPro" id="IPR023397">
    <property type="entry name" value="SAM-dep_MeTrfase_MraW_recog"/>
</dbReference>
<dbReference type="InterPro" id="IPR029063">
    <property type="entry name" value="SAM-dependent_MTases_sf"/>
</dbReference>
<dbReference type="NCBIfam" id="TIGR00006">
    <property type="entry name" value="16S rRNA (cytosine(1402)-N(4))-methyltransferase RsmH"/>
    <property type="match status" value="1"/>
</dbReference>
<dbReference type="PANTHER" id="PTHR11265:SF0">
    <property type="entry name" value="12S RRNA N4-METHYLCYTIDINE METHYLTRANSFERASE"/>
    <property type="match status" value="1"/>
</dbReference>
<dbReference type="PANTHER" id="PTHR11265">
    <property type="entry name" value="S-ADENOSYL-METHYLTRANSFERASE MRAW"/>
    <property type="match status" value="1"/>
</dbReference>
<dbReference type="Pfam" id="PF01795">
    <property type="entry name" value="Methyltransf_5"/>
    <property type="match status" value="1"/>
</dbReference>
<dbReference type="PIRSF" id="PIRSF004486">
    <property type="entry name" value="MraW"/>
    <property type="match status" value="1"/>
</dbReference>
<dbReference type="SUPFAM" id="SSF81799">
    <property type="entry name" value="Putative methyltransferase TM0872, insert domain"/>
    <property type="match status" value="1"/>
</dbReference>
<dbReference type="SUPFAM" id="SSF53335">
    <property type="entry name" value="S-adenosyl-L-methionine-dependent methyltransferases"/>
    <property type="match status" value="1"/>
</dbReference>
<organism>
    <name type="scientific">Acidothermus cellulolyticus (strain ATCC 43068 / DSM 8971 / 11B)</name>
    <dbReference type="NCBI Taxonomy" id="351607"/>
    <lineage>
        <taxon>Bacteria</taxon>
        <taxon>Bacillati</taxon>
        <taxon>Actinomycetota</taxon>
        <taxon>Actinomycetes</taxon>
        <taxon>Acidothermales</taxon>
        <taxon>Acidothermaceae</taxon>
        <taxon>Acidothermus</taxon>
    </lineage>
</organism>
<keyword id="KW-0963">Cytoplasm</keyword>
<keyword id="KW-0489">Methyltransferase</keyword>
<keyword id="KW-1185">Reference proteome</keyword>
<keyword id="KW-0698">rRNA processing</keyword>
<keyword id="KW-0949">S-adenosyl-L-methionine</keyword>
<keyword id="KW-0808">Transferase</keyword>
<feature type="chain" id="PRO_0000386685" description="Ribosomal RNA small subunit methyltransferase H">
    <location>
        <begin position="1"/>
        <end position="329"/>
    </location>
</feature>
<feature type="region of interest" description="Disordered" evidence="2">
    <location>
        <begin position="295"/>
        <end position="329"/>
    </location>
</feature>
<feature type="compositionally biased region" description="Basic and acidic residues" evidence="2">
    <location>
        <begin position="317"/>
        <end position="329"/>
    </location>
</feature>
<feature type="binding site" evidence="1">
    <location>
        <begin position="46"/>
        <end position="48"/>
    </location>
    <ligand>
        <name>S-adenosyl-L-methionine</name>
        <dbReference type="ChEBI" id="CHEBI:59789"/>
    </ligand>
</feature>
<feature type="binding site" evidence="1">
    <location>
        <position position="65"/>
    </location>
    <ligand>
        <name>S-adenosyl-L-methionine</name>
        <dbReference type="ChEBI" id="CHEBI:59789"/>
    </ligand>
</feature>
<feature type="binding site" evidence="1">
    <location>
        <position position="92"/>
    </location>
    <ligand>
        <name>S-adenosyl-L-methionine</name>
        <dbReference type="ChEBI" id="CHEBI:59789"/>
    </ligand>
</feature>
<feature type="binding site" evidence="1">
    <location>
        <position position="113"/>
    </location>
    <ligand>
        <name>S-adenosyl-L-methionine</name>
        <dbReference type="ChEBI" id="CHEBI:59789"/>
    </ligand>
</feature>
<feature type="binding site" evidence="1">
    <location>
        <position position="120"/>
    </location>
    <ligand>
        <name>S-adenosyl-L-methionine</name>
        <dbReference type="ChEBI" id="CHEBI:59789"/>
    </ligand>
</feature>
<comment type="function">
    <text evidence="1">Specifically methylates the N4 position of cytidine in position 1402 (C1402) of 16S rRNA.</text>
</comment>
<comment type="catalytic activity">
    <reaction evidence="1">
        <text>cytidine(1402) in 16S rRNA + S-adenosyl-L-methionine = N(4)-methylcytidine(1402) in 16S rRNA + S-adenosyl-L-homocysteine + H(+)</text>
        <dbReference type="Rhea" id="RHEA:42928"/>
        <dbReference type="Rhea" id="RHEA-COMP:10286"/>
        <dbReference type="Rhea" id="RHEA-COMP:10287"/>
        <dbReference type="ChEBI" id="CHEBI:15378"/>
        <dbReference type="ChEBI" id="CHEBI:57856"/>
        <dbReference type="ChEBI" id="CHEBI:59789"/>
        <dbReference type="ChEBI" id="CHEBI:74506"/>
        <dbReference type="ChEBI" id="CHEBI:82748"/>
        <dbReference type="EC" id="2.1.1.199"/>
    </reaction>
</comment>
<comment type="subcellular location">
    <subcellularLocation>
        <location evidence="1">Cytoplasm</location>
    </subcellularLocation>
</comment>
<comment type="similarity">
    <text evidence="1">Belongs to the methyltransferase superfamily. RsmH family.</text>
</comment>
<accession>A0LTL5</accession>
<gene>
    <name evidence="1" type="primary">rsmH</name>
    <name type="synonym">mraW</name>
    <name type="ordered locus">Acel_1002</name>
</gene>
<sequence>MTADPGSSVPPAVVHRPVMVDRVVELLLPALGYPGAIVVDATVGLGGHAEAVVRAASAATLIGLDHDPHAIRLAAQRLAGYADRVQLVNVAFDRLAQVLSERGISAVAAILFDLGLSSLHIDDPARGFAYSRDVPLDMRMDPRLPRTAADVVNTYSATELARVLRVYGEERFAVRIADAIVRRRARQPITSTRDLSELVREAIPAPARRTGGHPAKRTFQALRIEVNDELGRLERTLPVAIAALQPGGRIVVLSYHSLEDRTVKRFFQAAASDATPAGLPTALPTARPRLRLLTRGAERPSPAEVAANPRAASARLRAAEKIRDTREAA</sequence>
<protein>
    <recommendedName>
        <fullName evidence="1">Ribosomal RNA small subunit methyltransferase H</fullName>
        <ecNumber evidence="1">2.1.1.199</ecNumber>
    </recommendedName>
    <alternativeName>
        <fullName evidence="1">16S rRNA m(4)C1402 methyltransferase</fullName>
    </alternativeName>
    <alternativeName>
        <fullName evidence="1">rRNA (cytosine-N(4)-)-methyltransferase RsmH</fullName>
    </alternativeName>
</protein>
<proteinExistence type="inferred from homology"/>